<comment type="function">
    <text>Sequence-specific transcription factor which is part of a developmental regulatory system that provides cells with specific positional identities on the anterior-posterior axis.</text>
</comment>
<comment type="subcellular location">
    <subcellularLocation>
        <location>Nucleus</location>
    </subcellularLocation>
</comment>
<comment type="similarity">
    <text evidence="3">Belongs to the Antp homeobox family. Deformed subfamily.</text>
</comment>
<accession>Q08624</accession>
<protein>
    <recommendedName>
        <fullName>Homeobox protein Hox-C4</fullName>
    </recommendedName>
    <alternativeName>
        <fullName>Homeobox protein Hox-3.5</fullName>
    </alternativeName>
</protein>
<name>HXC4_MOUSE</name>
<gene>
    <name type="primary">Hoxc4</name>
    <name type="synonym">Hox-3.5</name>
    <name type="synonym">Hoxc-4</name>
</gene>
<dbReference type="EMBL" id="D11328">
    <property type="protein sequence ID" value="BAA01947.1"/>
    <property type="molecule type" value="Genomic_DNA"/>
</dbReference>
<dbReference type="EMBL" id="S62287">
    <property type="protein sequence ID" value="AAB27153.1"/>
    <property type="molecule type" value="Genomic_DNA"/>
</dbReference>
<dbReference type="EMBL" id="X69019">
    <property type="protein sequence ID" value="CAA48784.1"/>
    <property type="molecule type" value="mRNA"/>
</dbReference>
<dbReference type="EMBL" id="M81660">
    <property type="protein sequence ID" value="AAA63313.1"/>
    <property type="molecule type" value="Genomic_DNA"/>
</dbReference>
<dbReference type="CCDS" id="CCDS27897.1"/>
<dbReference type="PIR" id="S35219">
    <property type="entry name" value="S35219"/>
</dbReference>
<dbReference type="RefSeq" id="NP_038581.2">
    <property type="nucleotide sequence ID" value="NM_013553.2"/>
</dbReference>
<dbReference type="RefSeq" id="XP_006520524.1">
    <property type="nucleotide sequence ID" value="XM_006520461.4"/>
</dbReference>
<dbReference type="RefSeq" id="XP_006520525.1">
    <property type="nucleotide sequence ID" value="XM_006520462.5"/>
</dbReference>
<dbReference type="RefSeq" id="XP_006520526.1">
    <property type="nucleotide sequence ID" value="XM_006520463.4"/>
</dbReference>
<dbReference type="RefSeq" id="XP_011243762.1">
    <property type="nucleotide sequence ID" value="XM_011245460.4"/>
</dbReference>
<dbReference type="SMR" id="Q08624"/>
<dbReference type="BioGRID" id="200386">
    <property type="interactions" value="6"/>
</dbReference>
<dbReference type="FunCoup" id="Q08624">
    <property type="interactions" value="1613"/>
</dbReference>
<dbReference type="IntAct" id="Q08624">
    <property type="interactions" value="5"/>
</dbReference>
<dbReference type="STRING" id="10090.ENSMUSP00000097740"/>
<dbReference type="GlyGen" id="Q08624">
    <property type="glycosylation" value="2 sites"/>
</dbReference>
<dbReference type="iPTMnet" id="Q08624"/>
<dbReference type="PhosphoSitePlus" id="Q08624"/>
<dbReference type="PaxDb" id="10090-ENSMUSP00000097740"/>
<dbReference type="ProteomicsDB" id="273232"/>
<dbReference type="Antibodypedia" id="27312">
    <property type="antibodies" value="307 antibodies from 28 providers"/>
</dbReference>
<dbReference type="DNASU" id="15423"/>
<dbReference type="Ensembl" id="ENSMUST00000100164.5">
    <property type="protein sequence ID" value="ENSMUSP00000097740.4"/>
    <property type="gene ID" value="ENSMUSG00000075394.5"/>
</dbReference>
<dbReference type="GeneID" id="15423"/>
<dbReference type="KEGG" id="mmu:15423"/>
<dbReference type="UCSC" id="uc007xxg.1">
    <property type="organism name" value="mouse"/>
</dbReference>
<dbReference type="AGR" id="MGI:96195"/>
<dbReference type="CTD" id="3221"/>
<dbReference type="MGI" id="MGI:96195">
    <property type="gene designation" value="Hoxc4"/>
</dbReference>
<dbReference type="VEuPathDB" id="HostDB:ENSMUSG00000075394"/>
<dbReference type="eggNOG" id="KOG0489">
    <property type="taxonomic scope" value="Eukaryota"/>
</dbReference>
<dbReference type="GeneTree" id="ENSGT00940000160794"/>
<dbReference type="HOGENOM" id="CLU_061398_0_0_1"/>
<dbReference type="InParanoid" id="Q08624"/>
<dbReference type="OMA" id="QDRQYNC"/>
<dbReference type="OrthoDB" id="6159439at2759"/>
<dbReference type="PhylomeDB" id="Q08624"/>
<dbReference type="TreeFam" id="TF352857"/>
<dbReference type="BioGRID-ORCS" id="15423">
    <property type="hits" value="2 hits in 77 CRISPR screens"/>
</dbReference>
<dbReference type="PRO" id="PR:Q08624"/>
<dbReference type="Proteomes" id="UP000000589">
    <property type="component" value="Chromosome 15"/>
</dbReference>
<dbReference type="RNAct" id="Q08624">
    <property type="molecule type" value="protein"/>
</dbReference>
<dbReference type="Bgee" id="ENSMUSG00000075394">
    <property type="expression patterns" value="Expressed in superior cervical ganglion and 100 other cell types or tissues"/>
</dbReference>
<dbReference type="ExpressionAtlas" id="Q08624">
    <property type="expression patterns" value="baseline and differential"/>
</dbReference>
<dbReference type="GO" id="GO:0005654">
    <property type="term" value="C:nucleoplasm"/>
    <property type="evidence" value="ECO:0000304"/>
    <property type="project" value="Reactome"/>
</dbReference>
<dbReference type="GO" id="GO:0001228">
    <property type="term" value="F:DNA-binding transcription activator activity, RNA polymerase II-specific"/>
    <property type="evidence" value="ECO:0007669"/>
    <property type="project" value="Ensembl"/>
</dbReference>
<dbReference type="GO" id="GO:0071837">
    <property type="term" value="F:HMG box domain binding"/>
    <property type="evidence" value="ECO:0000353"/>
    <property type="project" value="UniProtKB"/>
</dbReference>
<dbReference type="GO" id="GO:0000978">
    <property type="term" value="F:RNA polymerase II cis-regulatory region sequence-specific DNA binding"/>
    <property type="evidence" value="ECO:0007669"/>
    <property type="project" value="Ensembl"/>
</dbReference>
<dbReference type="GO" id="GO:0009952">
    <property type="term" value="P:anterior/posterior pattern specification"/>
    <property type="evidence" value="ECO:0000315"/>
    <property type="project" value="MGI"/>
</dbReference>
<dbReference type="GO" id="GO:0051216">
    <property type="term" value="P:cartilage development"/>
    <property type="evidence" value="ECO:0000315"/>
    <property type="project" value="MGI"/>
</dbReference>
<dbReference type="GO" id="GO:0048562">
    <property type="term" value="P:embryonic organ morphogenesis"/>
    <property type="evidence" value="ECO:0000315"/>
    <property type="project" value="MGI"/>
</dbReference>
<dbReference type="GO" id="GO:0001501">
    <property type="term" value="P:skeletal system development"/>
    <property type="evidence" value="ECO:0000315"/>
    <property type="project" value="MGI"/>
</dbReference>
<dbReference type="CDD" id="cd00086">
    <property type="entry name" value="homeodomain"/>
    <property type="match status" value="1"/>
</dbReference>
<dbReference type="FunFam" id="1.10.10.60:FF:000029">
    <property type="entry name" value="Homeobox protein Hox-D4"/>
    <property type="match status" value="1"/>
</dbReference>
<dbReference type="Gene3D" id="1.10.10.60">
    <property type="entry name" value="Homeodomain-like"/>
    <property type="match status" value="1"/>
</dbReference>
<dbReference type="InterPro" id="IPR050609">
    <property type="entry name" value="Antp_homeobox_Deformed_sf"/>
</dbReference>
<dbReference type="InterPro" id="IPR001356">
    <property type="entry name" value="HD"/>
</dbReference>
<dbReference type="InterPro" id="IPR020479">
    <property type="entry name" value="HD_metazoa"/>
</dbReference>
<dbReference type="InterPro" id="IPR017995">
    <property type="entry name" value="Homeobox_antennapedia"/>
</dbReference>
<dbReference type="InterPro" id="IPR001827">
    <property type="entry name" value="Homeobox_Antennapedia_CS"/>
</dbReference>
<dbReference type="InterPro" id="IPR017970">
    <property type="entry name" value="Homeobox_CS"/>
</dbReference>
<dbReference type="InterPro" id="IPR009057">
    <property type="entry name" value="Homeodomain-like_sf"/>
</dbReference>
<dbReference type="PANTHER" id="PTHR45771:SF9">
    <property type="entry name" value="HOMEOBOX PROTEIN HOX-C4"/>
    <property type="match status" value="1"/>
</dbReference>
<dbReference type="PANTHER" id="PTHR45771">
    <property type="entry name" value="HOMEOTIC PROTEIN DEFORMED"/>
    <property type="match status" value="1"/>
</dbReference>
<dbReference type="Pfam" id="PF00046">
    <property type="entry name" value="Homeodomain"/>
    <property type="match status" value="1"/>
</dbReference>
<dbReference type="PRINTS" id="PR00025">
    <property type="entry name" value="ANTENNAPEDIA"/>
</dbReference>
<dbReference type="PRINTS" id="PR00024">
    <property type="entry name" value="HOMEOBOX"/>
</dbReference>
<dbReference type="SMART" id="SM00389">
    <property type="entry name" value="HOX"/>
    <property type="match status" value="1"/>
</dbReference>
<dbReference type="SUPFAM" id="SSF46689">
    <property type="entry name" value="Homeodomain-like"/>
    <property type="match status" value="1"/>
</dbReference>
<dbReference type="PROSITE" id="PS00032">
    <property type="entry name" value="ANTENNAPEDIA"/>
    <property type="match status" value="1"/>
</dbReference>
<dbReference type="PROSITE" id="PS00027">
    <property type="entry name" value="HOMEOBOX_1"/>
    <property type="match status" value="1"/>
</dbReference>
<dbReference type="PROSITE" id="PS50071">
    <property type="entry name" value="HOMEOBOX_2"/>
    <property type="match status" value="1"/>
</dbReference>
<keyword id="KW-0217">Developmental protein</keyword>
<keyword id="KW-0238">DNA-binding</keyword>
<keyword id="KW-0371">Homeobox</keyword>
<keyword id="KW-0539">Nucleus</keyword>
<keyword id="KW-1185">Reference proteome</keyword>
<keyword id="KW-0804">Transcription</keyword>
<keyword id="KW-0805">Transcription regulation</keyword>
<sequence>MIMSSYLMDSNYIDPKFPPCEEYSQNSYIPEHSPEYYGRTRESGFQHHHQELYPPPPPRPSYPERQYSCTSLQGPGNSRAHGPAQAGHHHPEKSQPLCEPAPLSGTSASPSPAPPACSQPAPDHPSSAASKQPIVYPWMKKIHVSTVNPNYNGGEPKRSRTAYTRQQVLELEKEFHYNRYLTRRRRIEIAHSLCLSERQIKIWFQNRRMKWKKDHRLPNTKVRSAPPAGAAPSTLSAATPGTSEDHSQSATPPEQQRAEDITRL</sequence>
<proteinExistence type="evidence at transcript level"/>
<organism>
    <name type="scientific">Mus musculus</name>
    <name type="common">Mouse</name>
    <dbReference type="NCBI Taxonomy" id="10090"/>
    <lineage>
        <taxon>Eukaryota</taxon>
        <taxon>Metazoa</taxon>
        <taxon>Chordata</taxon>
        <taxon>Craniata</taxon>
        <taxon>Vertebrata</taxon>
        <taxon>Euteleostomi</taxon>
        <taxon>Mammalia</taxon>
        <taxon>Eutheria</taxon>
        <taxon>Euarchontoglires</taxon>
        <taxon>Glires</taxon>
        <taxon>Rodentia</taxon>
        <taxon>Myomorpha</taxon>
        <taxon>Muroidea</taxon>
        <taxon>Muridae</taxon>
        <taxon>Murinae</taxon>
        <taxon>Mus</taxon>
        <taxon>Mus</taxon>
    </lineage>
</organism>
<evidence type="ECO:0000255" key="1">
    <source>
        <dbReference type="PROSITE-ProRule" id="PRU00108"/>
    </source>
</evidence>
<evidence type="ECO:0000256" key="2">
    <source>
        <dbReference type="SAM" id="MobiDB-lite"/>
    </source>
</evidence>
<evidence type="ECO:0000305" key="3"/>
<reference key="1">
    <citation type="journal article" date="1993" name="Mol. Gen. Genet.">
        <title>Organization and expression of mouse Hox3 cluster genes.</title>
        <authorList>
            <person name="Goto J."/>
            <person name="Miyabayashi T."/>
            <person name="Wakamatsu Y."/>
            <person name="Takahashi N."/>
            <person name="Muramatsu M.-A."/>
        </authorList>
    </citation>
    <scope>NUCLEOTIDE SEQUENCE [GENOMIC DNA]</scope>
    <source>
        <strain>BALB/cJ</strain>
        <tissue>Liver</tissue>
    </source>
</reference>
<reference key="2">
    <citation type="journal article" date="1992" name="Development">
        <title>Sequence and embryonic expression of the murine Hox-3.5 gene.</title>
        <authorList>
            <person name="Geada A.M.C."/>
            <person name="Gaunt S.J."/>
            <person name="Azzawi M."/>
            <person name="Shimeld S.M."/>
            <person name="Pearce J."/>
            <person name="Sharpe P.T."/>
        </authorList>
    </citation>
    <scope>NUCLEOTIDE SEQUENCE [MRNA]</scope>
    <source>
        <tissue>Embryo</tissue>
    </source>
</reference>
<reference key="3">
    <citation type="journal article" date="1991" name="Proc. Natl. Acad. Sci. U.S.A.">
        <title>Detection of homeobox genes in development and evolution.</title>
        <authorList>
            <person name="Murtha M.T."/>
            <person name="Leckman J.F."/>
            <person name="Ruddle F.H."/>
        </authorList>
    </citation>
    <scope>NUCLEOTIDE SEQUENCE [GENOMIC DNA] OF 177-201</scope>
    <source>
        <strain>C57BL/6J</strain>
        <tissue>Spleen</tissue>
    </source>
</reference>
<feature type="chain" id="PRO_0000200165" description="Homeobox protein Hox-C4">
    <location>
        <begin position="1"/>
        <end position="264"/>
    </location>
</feature>
<feature type="DNA-binding region" description="Homeobox" evidence="1">
    <location>
        <begin position="156"/>
        <end position="215"/>
    </location>
</feature>
<feature type="region of interest" description="Disordered" evidence="2">
    <location>
        <begin position="19"/>
        <end position="130"/>
    </location>
</feature>
<feature type="region of interest" description="Disordered" evidence="2">
    <location>
        <begin position="214"/>
        <end position="264"/>
    </location>
</feature>
<feature type="short sequence motif" description="Antp-type hexapeptide">
    <location>
        <begin position="135"/>
        <end position="140"/>
    </location>
</feature>
<feature type="compositionally biased region" description="Basic and acidic residues" evidence="2">
    <location>
        <begin position="32"/>
        <end position="51"/>
    </location>
</feature>
<feature type="compositionally biased region" description="Low complexity" evidence="2">
    <location>
        <begin position="100"/>
        <end position="110"/>
    </location>
</feature>
<feature type="compositionally biased region" description="Polar residues" evidence="2">
    <location>
        <begin position="233"/>
        <end position="254"/>
    </location>
</feature>
<feature type="sequence conflict" description="In Ref. 2; CAA48784." evidence="3" ref="2">
    <original>A</original>
    <variation>G</variation>
    <location>
        <position position="80"/>
    </location>
</feature>
<feature type="sequence conflict" description="In Ref. 2; CAA48784." evidence="3" ref="2">
    <original>P</original>
    <variation>S</variation>
    <location>
        <position position="96"/>
    </location>
</feature>